<gene>
    <name evidence="1" type="primary">miaB</name>
    <name type="ordered locus">BALH_3400</name>
</gene>
<feature type="chain" id="PRO_0000374137" description="tRNA-2-methylthio-N(6)-dimethylallyladenosine synthase">
    <location>
        <begin position="1"/>
        <end position="509"/>
    </location>
</feature>
<feature type="domain" description="MTTase N-terminal" evidence="1">
    <location>
        <begin position="66"/>
        <end position="184"/>
    </location>
</feature>
<feature type="domain" description="Radical SAM core" evidence="2">
    <location>
        <begin position="207"/>
        <end position="437"/>
    </location>
</feature>
<feature type="domain" description="TRAM" evidence="1">
    <location>
        <begin position="440"/>
        <end position="503"/>
    </location>
</feature>
<feature type="region of interest" description="Disordered" evidence="3">
    <location>
        <begin position="1"/>
        <end position="26"/>
    </location>
</feature>
<feature type="compositionally biased region" description="Polar residues" evidence="3">
    <location>
        <begin position="1"/>
        <end position="15"/>
    </location>
</feature>
<feature type="compositionally biased region" description="Basic and acidic residues" evidence="3">
    <location>
        <begin position="16"/>
        <end position="25"/>
    </location>
</feature>
<feature type="binding site" evidence="1">
    <location>
        <position position="75"/>
    </location>
    <ligand>
        <name>[4Fe-4S] cluster</name>
        <dbReference type="ChEBI" id="CHEBI:49883"/>
        <label>1</label>
    </ligand>
</feature>
<feature type="binding site" evidence="1">
    <location>
        <position position="111"/>
    </location>
    <ligand>
        <name>[4Fe-4S] cluster</name>
        <dbReference type="ChEBI" id="CHEBI:49883"/>
        <label>1</label>
    </ligand>
</feature>
<feature type="binding site" evidence="1">
    <location>
        <position position="145"/>
    </location>
    <ligand>
        <name>[4Fe-4S] cluster</name>
        <dbReference type="ChEBI" id="CHEBI:49883"/>
        <label>1</label>
    </ligand>
</feature>
<feature type="binding site" evidence="1">
    <location>
        <position position="221"/>
    </location>
    <ligand>
        <name>[4Fe-4S] cluster</name>
        <dbReference type="ChEBI" id="CHEBI:49883"/>
        <label>2</label>
        <note>4Fe-4S-S-AdoMet</note>
    </ligand>
</feature>
<feature type="binding site" evidence="1">
    <location>
        <position position="225"/>
    </location>
    <ligand>
        <name>[4Fe-4S] cluster</name>
        <dbReference type="ChEBI" id="CHEBI:49883"/>
        <label>2</label>
        <note>4Fe-4S-S-AdoMet</note>
    </ligand>
</feature>
<feature type="binding site" evidence="1">
    <location>
        <position position="228"/>
    </location>
    <ligand>
        <name>[4Fe-4S] cluster</name>
        <dbReference type="ChEBI" id="CHEBI:49883"/>
        <label>2</label>
        <note>4Fe-4S-S-AdoMet</note>
    </ligand>
</feature>
<proteinExistence type="inferred from homology"/>
<keyword id="KW-0004">4Fe-4S</keyword>
<keyword id="KW-0963">Cytoplasm</keyword>
<keyword id="KW-0408">Iron</keyword>
<keyword id="KW-0411">Iron-sulfur</keyword>
<keyword id="KW-0479">Metal-binding</keyword>
<keyword id="KW-0949">S-adenosyl-L-methionine</keyword>
<keyword id="KW-0808">Transferase</keyword>
<keyword id="KW-0819">tRNA processing</keyword>
<organism>
    <name type="scientific">Bacillus thuringiensis (strain Al Hakam)</name>
    <dbReference type="NCBI Taxonomy" id="412694"/>
    <lineage>
        <taxon>Bacteria</taxon>
        <taxon>Bacillati</taxon>
        <taxon>Bacillota</taxon>
        <taxon>Bacilli</taxon>
        <taxon>Bacillales</taxon>
        <taxon>Bacillaceae</taxon>
        <taxon>Bacillus</taxon>
        <taxon>Bacillus cereus group</taxon>
    </lineage>
</organism>
<comment type="function">
    <text evidence="1">Catalyzes the methylthiolation of N6-(dimethylallyl)adenosine (i(6)A), leading to the formation of 2-methylthio-N6-(dimethylallyl)adenosine (ms(2)i(6)A) at position 37 in tRNAs that read codons beginning with uridine.</text>
</comment>
<comment type="catalytic activity">
    <reaction evidence="1">
        <text>N(6)-dimethylallyladenosine(37) in tRNA + (sulfur carrier)-SH + AH2 + 2 S-adenosyl-L-methionine = 2-methylsulfanyl-N(6)-dimethylallyladenosine(37) in tRNA + (sulfur carrier)-H + 5'-deoxyadenosine + L-methionine + A + S-adenosyl-L-homocysteine + 2 H(+)</text>
        <dbReference type="Rhea" id="RHEA:37067"/>
        <dbReference type="Rhea" id="RHEA-COMP:10375"/>
        <dbReference type="Rhea" id="RHEA-COMP:10376"/>
        <dbReference type="Rhea" id="RHEA-COMP:14737"/>
        <dbReference type="Rhea" id="RHEA-COMP:14739"/>
        <dbReference type="ChEBI" id="CHEBI:13193"/>
        <dbReference type="ChEBI" id="CHEBI:15378"/>
        <dbReference type="ChEBI" id="CHEBI:17319"/>
        <dbReference type="ChEBI" id="CHEBI:17499"/>
        <dbReference type="ChEBI" id="CHEBI:29917"/>
        <dbReference type="ChEBI" id="CHEBI:57844"/>
        <dbReference type="ChEBI" id="CHEBI:57856"/>
        <dbReference type="ChEBI" id="CHEBI:59789"/>
        <dbReference type="ChEBI" id="CHEBI:64428"/>
        <dbReference type="ChEBI" id="CHEBI:74415"/>
        <dbReference type="ChEBI" id="CHEBI:74417"/>
        <dbReference type="EC" id="2.8.4.3"/>
    </reaction>
</comment>
<comment type="cofactor">
    <cofactor evidence="1">
        <name>[4Fe-4S] cluster</name>
        <dbReference type="ChEBI" id="CHEBI:49883"/>
    </cofactor>
    <text evidence="1">Binds 2 [4Fe-4S] clusters. One cluster is coordinated with 3 cysteines and an exchangeable S-adenosyl-L-methionine.</text>
</comment>
<comment type="subunit">
    <text evidence="1">Monomer.</text>
</comment>
<comment type="subcellular location">
    <subcellularLocation>
        <location evidence="1">Cytoplasm</location>
    </subcellularLocation>
</comment>
<comment type="similarity">
    <text evidence="1">Belongs to the methylthiotransferase family. MiaB subfamily.</text>
</comment>
<comment type="sequence caution" evidence="4">
    <conflict type="erroneous initiation">
        <sequence resource="EMBL-CDS" id="ABK86637"/>
    </conflict>
</comment>
<sequence>MNEQQRLASQQVNSSTKKEEKDYSKYFESVYQPPSLKDAKKRGKEEVKIERDFGLPEEFRNFGTGRKFYIRTYGCQMNEHDTEVMAGIFTALGYEPTFSTEDADVVLLNTCAIRENAENKVFGELGHLKSLKRRNPDLLIGVCGCMSQEESVVNKIMQKNQHVDMVFGTHNIHRLPYILKDAMFSKETVVEVWSKEGDVIENLPKVRRGDIKAWVNIMYGCDKFCTYCIVPYTRGKERSRRPEDIIQEIRHLAANGYKEITLLGQNVNAYGKDFEDIEYGLGDLMDELRKVDIARIRFTTSHPRDFDDHLIEVLGKGGNLVEHIHLPVQSGSTEMLKIMARKYSREHYLELVRKIKEAIPNAVLTTDIIVGFPNETDEQFEETMSLYREVGFDTAFTFIYSPREGTPAAKMKDNVPMEVKKERLQRLNALVNKLAIEKNDRYKGQIVEVLVDGESKNNPEVLAGYTRTNKLVNFVAPKSLIGQLVKVKVTDAKTWSLNGELVEEPIEVE</sequence>
<accession>A0RHE4</accession>
<protein>
    <recommendedName>
        <fullName evidence="1">tRNA-2-methylthio-N(6)-dimethylallyladenosine synthase</fullName>
        <ecNumber evidence="1">2.8.4.3</ecNumber>
    </recommendedName>
    <alternativeName>
        <fullName evidence="1">(Dimethylallyl)adenosine tRNA methylthiotransferase MiaB</fullName>
    </alternativeName>
    <alternativeName>
        <fullName evidence="1">tRNA-i(6)A37 methylthiotransferase</fullName>
    </alternativeName>
</protein>
<name>MIAB_BACAH</name>
<dbReference type="EC" id="2.8.4.3" evidence="1"/>
<dbReference type="EMBL" id="CP000485">
    <property type="protein sequence ID" value="ABK86637.1"/>
    <property type="status" value="ALT_INIT"/>
    <property type="molecule type" value="Genomic_DNA"/>
</dbReference>
<dbReference type="RefSeq" id="WP_001005400.1">
    <property type="nucleotide sequence ID" value="NC_008600.1"/>
</dbReference>
<dbReference type="SMR" id="A0RHE4"/>
<dbReference type="KEGG" id="btl:BALH_3400"/>
<dbReference type="HOGENOM" id="CLU_018697_2_0_9"/>
<dbReference type="GO" id="GO:0005829">
    <property type="term" value="C:cytosol"/>
    <property type="evidence" value="ECO:0007669"/>
    <property type="project" value="TreeGrafter"/>
</dbReference>
<dbReference type="GO" id="GO:0051539">
    <property type="term" value="F:4 iron, 4 sulfur cluster binding"/>
    <property type="evidence" value="ECO:0007669"/>
    <property type="project" value="UniProtKB-UniRule"/>
</dbReference>
<dbReference type="GO" id="GO:0046872">
    <property type="term" value="F:metal ion binding"/>
    <property type="evidence" value="ECO:0007669"/>
    <property type="project" value="UniProtKB-KW"/>
</dbReference>
<dbReference type="GO" id="GO:0035597">
    <property type="term" value="F:N6-isopentenyladenosine methylthiotransferase activity"/>
    <property type="evidence" value="ECO:0007669"/>
    <property type="project" value="TreeGrafter"/>
</dbReference>
<dbReference type="CDD" id="cd01335">
    <property type="entry name" value="Radical_SAM"/>
    <property type="match status" value="1"/>
</dbReference>
<dbReference type="FunFam" id="3.40.50.12160:FF:000006">
    <property type="entry name" value="tRNA-2-methylthio-N(6)-dimethylallyladenosine synthase"/>
    <property type="match status" value="1"/>
</dbReference>
<dbReference type="FunFam" id="3.80.30.20:FF:000001">
    <property type="entry name" value="tRNA-2-methylthio-N(6)-dimethylallyladenosine synthase 2"/>
    <property type="match status" value="1"/>
</dbReference>
<dbReference type="Gene3D" id="3.40.50.12160">
    <property type="entry name" value="Methylthiotransferase, N-terminal domain"/>
    <property type="match status" value="1"/>
</dbReference>
<dbReference type="Gene3D" id="3.80.30.20">
    <property type="entry name" value="tm_1862 like domain"/>
    <property type="match status" value="1"/>
</dbReference>
<dbReference type="HAMAP" id="MF_01864">
    <property type="entry name" value="tRNA_metthiotr_MiaB"/>
    <property type="match status" value="1"/>
</dbReference>
<dbReference type="InterPro" id="IPR006638">
    <property type="entry name" value="Elp3/MiaA/NifB-like_rSAM"/>
</dbReference>
<dbReference type="InterPro" id="IPR005839">
    <property type="entry name" value="Methylthiotransferase"/>
</dbReference>
<dbReference type="InterPro" id="IPR020612">
    <property type="entry name" value="Methylthiotransferase_CS"/>
</dbReference>
<dbReference type="InterPro" id="IPR013848">
    <property type="entry name" value="Methylthiotransferase_N"/>
</dbReference>
<dbReference type="InterPro" id="IPR038135">
    <property type="entry name" value="Methylthiotransferase_N_sf"/>
</dbReference>
<dbReference type="InterPro" id="IPR006463">
    <property type="entry name" value="MiaB_methiolase"/>
</dbReference>
<dbReference type="InterPro" id="IPR007197">
    <property type="entry name" value="rSAM"/>
</dbReference>
<dbReference type="InterPro" id="IPR023404">
    <property type="entry name" value="rSAM_horseshoe"/>
</dbReference>
<dbReference type="InterPro" id="IPR002792">
    <property type="entry name" value="TRAM_dom"/>
</dbReference>
<dbReference type="NCBIfam" id="TIGR01574">
    <property type="entry name" value="miaB-methiolase"/>
    <property type="match status" value="1"/>
</dbReference>
<dbReference type="NCBIfam" id="TIGR00089">
    <property type="entry name" value="MiaB/RimO family radical SAM methylthiotransferase"/>
    <property type="match status" value="1"/>
</dbReference>
<dbReference type="PANTHER" id="PTHR43020">
    <property type="entry name" value="CDK5 REGULATORY SUBUNIT-ASSOCIATED PROTEIN 1"/>
    <property type="match status" value="1"/>
</dbReference>
<dbReference type="PANTHER" id="PTHR43020:SF2">
    <property type="entry name" value="MITOCHONDRIAL TRNA METHYLTHIOTRANSFERASE CDK5RAP1"/>
    <property type="match status" value="1"/>
</dbReference>
<dbReference type="Pfam" id="PF04055">
    <property type="entry name" value="Radical_SAM"/>
    <property type="match status" value="1"/>
</dbReference>
<dbReference type="Pfam" id="PF01938">
    <property type="entry name" value="TRAM"/>
    <property type="match status" value="1"/>
</dbReference>
<dbReference type="Pfam" id="PF00919">
    <property type="entry name" value="UPF0004"/>
    <property type="match status" value="1"/>
</dbReference>
<dbReference type="SFLD" id="SFLDF00273">
    <property type="entry name" value="(dimethylallyl)adenosine_tRNA"/>
    <property type="match status" value="1"/>
</dbReference>
<dbReference type="SFLD" id="SFLDG01082">
    <property type="entry name" value="B12-binding_domain_containing"/>
    <property type="match status" value="1"/>
</dbReference>
<dbReference type="SFLD" id="SFLDS00029">
    <property type="entry name" value="Radical_SAM"/>
    <property type="match status" value="1"/>
</dbReference>
<dbReference type="SMART" id="SM00729">
    <property type="entry name" value="Elp3"/>
    <property type="match status" value="1"/>
</dbReference>
<dbReference type="SUPFAM" id="SSF102114">
    <property type="entry name" value="Radical SAM enzymes"/>
    <property type="match status" value="1"/>
</dbReference>
<dbReference type="PROSITE" id="PS51449">
    <property type="entry name" value="MTTASE_N"/>
    <property type="match status" value="1"/>
</dbReference>
<dbReference type="PROSITE" id="PS01278">
    <property type="entry name" value="MTTASE_RADICAL"/>
    <property type="match status" value="1"/>
</dbReference>
<dbReference type="PROSITE" id="PS51918">
    <property type="entry name" value="RADICAL_SAM"/>
    <property type="match status" value="1"/>
</dbReference>
<dbReference type="PROSITE" id="PS50926">
    <property type="entry name" value="TRAM"/>
    <property type="match status" value="1"/>
</dbReference>
<evidence type="ECO:0000255" key="1">
    <source>
        <dbReference type="HAMAP-Rule" id="MF_01864"/>
    </source>
</evidence>
<evidence type="ECO:0000255" key="2">
    <source>
        <dbReference type="PROSITE-ProRule" id="PRU01266"/>
    </source>
</evidence>
<evidence type="ECO:0000256" key="3">
    <source>
        <dbReference type="SAM" id="MobiDB-lite"/>
    </source>
</evidence>
<evidence type="ECO:0000305" key="4"/>
<reference key="1">
    <citation type="journal article" date="2007" name="J. Bacteriol.">
        <title>The complete genome sequence of Bacillus thuringiensis Al Hakam.</title>
        <authorList>
            <person name="Challacombe J.F."/>
            <person name="Altherr M.R."/>
            <person name="Xie G."/>
            <person name="Bhotika S.S."/>
            <person name="Brown N."/>
            <person name="Bruce D."/>
            <person name="Campbell C.S."/>
            <person name="Campbell M.L."/>
            <person name="Chen J."/>
            <person name="Chertkov O."/>
            <person name="Cleland C."/>
            <person name="Dimitrijevic M."/>
            <person name="Doggett N.A."/>
            <person name="Fawcett J.J."/>
            <person name="Glavina T."/>
            <person name="Goodwin L.A."/>
            <person name="Green L.D."/>
            <person name="Han C.S."/>
            <person name="Hill K.K."/>
            <person name="Hitchcock P."/>
            <person name="Jackson P.J."/>
            <person name="Keim P."/>
            <person name="Kewalramani A.R."/>
            <person name="Longmire J."/>
            <person name="Lucas S."/>
            <person name="Malfatti S."/>
            <person name="Martinez D."/>
            <person name="McMurry K."/>
            <person name="Meincke L.J."/>
            <person name="Misra M."/>
            <person name="Moseman B.L."/>
            <person name="Mundt M."/>
            <person name="Munk A.C."/>
            <person name="Okinaka R.T."/>
            <person name="Parson-Quintana B."/>
            <person name="Reilly L.P."/>
            <person name="Richardson P."/>
            <person name="Robinson D.L."/>
            <person name="Saunders E."/>
            <person name="Tapia R."/>
            <person name="Tesmer J.G."/>
            <person name="Thayer N."/>
            <person name="Thompson L.S."/>
            <person name="Tice H."/>
            <person name="Ticknor L.O."/>
            <person name="Wills P.L."/>
            <person name="Gilna P."/>
            <person name="Brettin T.S."/>
        </authorList>
    </citation>
    <scope>NUCLEOTIDE SEQUENCE [LARGE SCALE GENOMIC DNA]</scope>
    <source>
        <strain>Al Hakam</strain>
    </source>
</reference>